<feature type="chain" id="PRO_0000128038" description="Uncharacterized protein AF_1618">
    <location>
        <begin position="1"/>
        <end position="187"/>
    </location>
</feature>
<feature type="transmembrane region" description="Helical" evidence="1">
    <location>
        <begin position="29"/>
        <end position="50"/>
    </location>
</feature>
<feature type="transmembrane region" description="Helical" evidence="1">
    <location>
        <begin position="70"/>
        <end position="92"/>
    </location>
</feature>
<feature type="transmembrane region" description="Helical" evidence="1">
    <location>
        <begin position="128"/>
        <end position="147"/>
    </location>
</feature>
<feature type="transmembrane region" description="Helical" evidence="1">
    <location>
        <begin position="154"/>
        <end position="176"/>
    </location>
</feature>
<name>Y1618_ARCFU</name>
<sequence>MVEALILGWNPEYEPLKGWILNAAVTTKIFIDIFIGVWAFILAVVWVYWIERRPGEKVEKVEIWYRFPKFVIGYFLTFVIVAWLTSAAINAYAASLGVSVSELTTEQFKAAYAPFSAAVNEMNSLRRIFFALTFFSIGVISDFSVLRKEGLGRLALVYFVCLFGFIIWIGLAISYLFFHDVHLLFLK</sequence>
<protein>
    <recommendedName>
        <fullName>Uncharacterized protein AF_1618</fullName>
    </recommendedName>
</protein>
<comment type="subcellular location">
    <subcellularLocation>
        <location evidence="2">Cell membrane</location>
        <topology evidence="2">Multi-pass membrane protein</topology>
    </subcellularLocation>
</comment>
<organism>
    <name type="scientific">Archaeoglobus fulgidus (strain ATCC 49558 / DSM 4304 / JCM 9628 / NBRC 100126 / VC-16)</name>
    <dbReference type="NCBI Taxonomy" id="224325"/>
    <lineage>
        <taxon>Archaea</taxon>
        <taxon>Methanobacteriati</taxon>
        <taxon>Methanobacteriota</taxon>
        <taxon>Archaeoglobi</taxon>
        <taxon>Archaeoglobales</taxon>
        <taxon>Archaeoglobaceae</taxon>
        <taxon>Archaeoglobus</taxon>
    </lineage>
</organism>
<dbReference type="EMBL" id="AE000782">
    <property type="protein sequence ID" value="AAB89642.1"/>
    <property type="molecule type" value="Genomic_DNA"/>
</dbReference>
<dbReference type="PIR" id="A69452">
    <property type="entry name" value="A69452"/>
</dbReference>
<dbReference type="SMR" id="O28655"/>
<dbReference type="STRING" id="224325.AF_1618"/>
<dbReference type="PaxDb" id="224325-AF_1618"/>
<dbReference type="EnsemblBacteria" id="AAB89642">
    <property type="protein sequence ID" value="AAB89642"/>
    <property type="gene ID" value="AF_1618"/>
</dbReference>
<dbReference type="KEGG" id="afu:AF_1618"/>
<dbReference type="eggNOG" id="arCOG03874">
    <property type="taxonomic scope" value="Archaea"/>
</dbReference>
<dbReference type="HOGENOM" id="CLU_1444604_0_0_2"/>
<dbReference type="PhylomeDB" id="O28655"/>
<dbReference type="Proteomes" id="UP000002199">
    <property type="component" value="Chromosome"/>
</dbReference>
<dbReference type="GO" id="GO:0005886">
    <property type="term" value="C:plasma membrane"/>
    <property type="evidence" value="ECO:0007669"/>
    <property type="project" value="UniProtKB-SubCell"/>
</dbReference>
<dbReference type="InterPro" id="IPR018383">
    <property type="entry name" value="UPF0324_pro"/>
</dbReference>
<dbReference type="PANTHER" id="PTHR30106">
    <property type="entry name" value="INNER MEMBRANE PROTEIN YEIH-RELATED"/>
    <property type="match status" value="1"/>
</dbReference>
<dbReference type="PANTHER" id="PTHR30106:SF1">
    <property type="entry name" value="UPF0324 MEMBRANE PROTEIN FN0533"/>
    <property type="match status" value="1"/>
</dbReference>
<reference key="1">
    <citation type="journal article" date="1997" name="Nature">
        <title>The complete genome sequence of the hyperthermophilic, sulphate-reducing archaeon Archaeoglobus fulgidus.</title>
        <authorList>
            <person name="Klenk H.-P."/>
            <person name="Clayton R.A."/>
            <person name="Tomb J.-F."/>
            <person name="White O."/>
            <person name="Nelson K.E."/>
            <person name="Ketchum K.A."/>
            <person name="Dodson R.J."/>
            <person name="Gwinn M.L."/>
            <person name="Hickey E.K."/>
            <person name="Peterson J.D."/>
            <person name="Richardson D.L."/>
            <person name="Kerlavage A.R."/>
            <person name="Graham D.E."/>
            <person name="Kyrpides N.C."/>
            <person name="Fleischmann R.D."/>
            <person name="Quackenbush J."/>
            <person name="Lee N.H."/>
            <person name="Sutton G.G."/>
            <person name="Gill S.R."/>
            <person name="Kirkness E.F."/>
            <person name="Dougherty B.A."/>
            <person name="McKenney K."/>
            <person name="Adams M.D."/>
            <person name="Loftus B.J."/>
            <person name="Peterson S.N."/>
            <person name="Reich C.I."/>
            <person name="McNeil L.K."/>
            <person name="Badger J.H."/>
            <person name="Glodek A."/>
            <person name="Zhou L."/>
            <person name="Overbeek R."/>
            <person name="Gocayne J.D."/>
            <person name="Weidman J.F."/>
            <person name="McDonald L.A."/>
            <person name="Utterback T.R."/>
            <person name="Cotton M.D."/>
            <person name="Spriggs T."/>
            <person name="Artiach P."/>
            <person name="Kaine B.P."/>
            <person name="Sykes S.M."/>
            <person name="Sadow P.W."/>
            <person name="D'Andrea K.P."/>
            <person name="Bowman C."/>
            <person name="Fujii C."/>
            <person name="Garland S.A."/>
            <person name="Mason T.M."/>
            <person name="Olsen G.J."/>
            <person name="Fraser C.M."/>
            <person name="Smith H.O."/>
            <person name="Woese C.R."/>
            <person name="Venter J.C."/>
        </authorList>
    </citation>
    <scope>NUCLEOTIDE SEQUENCE [LARGE SCALE GENOMIC DNA]</scope>
    <source>
        <strain>ATCC 49558 / DSM 4304 / JCM 9628 / NBRC 100126 / VC-16</strain>
    </source>
</reference>
<proteinExistence type="predicted"/>
<accession>O28655</accession>
<evidence type="ECO:0000255" key="1"/>
<evidence type="ECO:0000305" key="2"/>
<gene>
    <name type="ordered locus">AF_1618</name>
</gene>
<keyword id="KW-1003">Cell membrane</keyword>
<keyword id="KW-0472">Membrane</keyword>
<keyword id="KW-1185">Reference proteome</keyword>
<keyword id="KW-0812">Transmembrane</keyword>
<keyword id="KW-1133">Transmembrane helix</keyword>